<name>CECD_HYACE</name>
<feature type="signal peptide">
    <location>
        <begin position="1"/>
        <end position="22"/>
    </location>
</feature>
<feature type="propeptide" id="PRO_0000004863" description="Removed by a dipeptidylpeptidase" evidence="1">
    <location>
        <begin position="23"/>
        <end position="24"/>
    </location>
</feature>
<feature type="chain" id="PRO_0000004864" description="Cecropin-D">
    <location>
        <begin position="25"/>
        <end position="60"/>
    </location>
</feature>
<feature type="modified residue" description="Lysine amide" evidence="1">
    <location>
        <position position="60"/>
    </location>
</feature>
<feature type="sequence conflict" description="In Ref. 1; CAA29872." evidence="2" ref="1">
    <original>F</original>
    <variation>L</variation>
    <location>
        <position position="8"/>
    </location>
</feature>
<feature type="sequence conflict" description="In Ref. 1; CAA29872." evidence="2" ref="1">
    <original>R</original>
    <variation>G</variation>
    <location>
        <position position="18"/>
    </location>
</feature>
<organism>
    <name type="scientific">Hyalophora cecropia</name>
    <name type="common">Cecropia moth</name>
    <name type="synonym">Samia cecropia</name>
    <dbReference type="NCBI Taxonomy" id="7123"/>
    <lineage>
        <taxon>Eukaryota</taxon>
        <taxon>Metazoa</taxon>
        <taxon>Ecdysozoa</taxon>
        <taxon>Arthropoda</taxon>
        <taxon>Hexapoda</taxon>
        <taxon>Insecta</taxon>
        <taxon>Pterygota</taxon>
        <taxon>Neoptera</taxon>
        <taxon>Endopterygota</taxon>
        <taxon>Lepidoptera</taxon>
        <taxon>Glossata</taxon>
        <taxon>Ditrysia</taxon>
        <taxon>Bombycoidea</taxon>
        <taxon>Saturniidae</taxon>
        <taxon>Saturniinae</taxon>
        <taxon>Attacini</taxon>
        <taxon>Hyalophora</taxon>
    </lineage>
</organism>
<proteinExistence type="evidence at protein level"/>
<comment type="function">
    <text>Cecropins have lytic and antibacterial activity against several Gram-positive and Gram-negative bacteria.</text>
</comment>
<comment type="subcellular location">
    <subcellularLocation>
        <location>Secreted</location>
    </subcellularLocation>
</comment>
<comment type="similarity">
    <text evidence="2">Belongs to the cecropin family.</text>
</comment>
<evidence type="ECO:0000269" key="1">
    <source>
    </source>
</evidence>
<evidence type="ECO:0000305" key="2"/>
<dbReference type="EMBL" id="X06673">
    <property type="protein sequence ID" value="CAA29872.1"/>
    <property type="molecule type" value="mRNA"/>
</dbReference>
<dbReference type="EMBL" id="M63846">
    <property type="protein sequence ID" value="AAA29186.1"/>
    <property type="molecule type" value="Genomic_DNA"/>
</dbReference>
<dbReference type="PIR" id="B40420">
    <property type="entry name" value="CKWKD"/>
</dbReference>
<dbReference type="SMR" id="P01510"/>
<dbReference type="GO" id="GO:0005576">
    <property type="term" value="C:extracellular region"/>
    <property type="evidence" value="ECO:0007669"/>
    <property type="project" value="UniProtKB-SubCell"/>
</dbReference>
<dbReference type="GO" id="GO:0019731">
    <property type="term" value="P:antibacterial humoral response"/>
    <property type="evidence" value="ECO:0007669"/>
    <property type="project" value="InterPro"/>
</dbReference>
<dbReference type="GO" id="GO:0050830">
    <property type="term" value="P:defense response to Gram-positive bacterium"/>
    <property type="evidence" value="ECO:0007669"/>
    <property type="project" value="UniProtKB-ARBA"/>
</dbReference>
<dbReference type="GO" id="GO:0045087">
    <property type="term" value="P:innate immune response"/>
    <property type="evidence" value="ECO:0007669"/>
    <property type="project" value="UniProtKB-KW"/>
</dbReference>
<dbReference type="InterPro" id="IPR000875">
    <property type="entry name" value="Cecropin"/>
</dbReference>
<dbReference type="Pfam" id="PF00272">
    <property type="entry name" value="Cecropin"/>
    <property type="match status" value="1"/>
</dbReference>
<dbReference type="PROSITE" id="PS00268">
    <property type="entry name" value="CECROPIN"/>
    <property type="match status" value="1"/>
</dbReference>
<reference key="1">
    <citation type="journal article" date="1987" name="FEBS Lett.">
        <title>Insect immunity: cDNA clones coding for the precursor forms of cecropins A and D, antibacterial proteins from Hyalophora cecropia.</title>
        <authorList>
            <person name="Lidholm D.-A."/>
            <person name="Gudmundsson G.H."/>
            <person name="Xanthopoulos K.G."/>
            <person name="Boman H.G."/>
        </authorList>
    </citation>
    <scope>NUCLEOTIDE SEQUENCE [MRNA]</scope>
</reference>
<reference key="2">
    <citation type="journal article" date="1991" name="J. Biol. Chem.">
        <title>The cecropin locus. Cloning and expression of a gene cluster encoding three antibacterial peptides in Hyalophora cecropia.</title>
        <authorList>
            <person name="Gudmundsson G.H."/>
            <person name="Lidholm D.-A."/>
            <person name="Aasling B."/>
            <person name="Gan R."/>
            <person name="Boman H.G."/>
        </authorList>
    </citation>
    <scope>NUCLEOTIDE SEQUENCE [GENOMIC DNA]</scope>
</reference>
<reference key="3">
    <citation type="journal article" date="1982" name="Eur. J. Biochem.">
        <title>Insect immunity: isolation and structure of cecropin D and four minor antibacterial components from Cecropia pupae.</title>
        <authorList>
            <person name="Hultmark D."/>
            <person name="Engstroem A."/>
            <person name="Bennich H."/>
            <person name="Kapur R."/>
            <person name="Boman H.G."/>
        </authorList>
    </citation>
    <scope>PROTEIN SEQUENCE OF 25-60</scope>
    <scope>AMIDATION AT LYS-60</scope>
</reference>
<sequence length="62" mass="6625">MNFTKILFFVVACVFAMRTVSAAPWNPFKELEKVGQRVRDAVISAGPAVATVAQATALAKGK</sequence>
<protein>
    <recommendedName>
        <fullName>Cecropin-D</fullName>
    </recommendedName>
</protein>
<accession>P01510</accession>
<keyword id="KW-0027">Amidation</keyword>
<keyword id="KW-0044">Antibiotic</keyword>
<keyword id="KW-0929">Antimicrobial</keyword>
<keyword id="KW-0903">Direct protein sequencing</keyword>
<keyword id="KW-0391">Immunity</keyword>
<keyword id="KW-0399">Innate immunity</keyword>
<keyword id="KW-0964">Secreted</keyword>
<keyword id="KW-0732">Signal</keyword>